<dbReference type="EC" id="3.6.1.7"/>
<dbReference type="EMBL" id="D86417">
    <property type="protein sequence ID" value="BAA22305.1"/>
    <property type="molecule type" value="Genomic_DNA"/>
</dbReference>
<dbReference type="EMBL" id="AL009126">
    <property type="protein sequence ID" value="CAB12593.1"/>
    <property type="molecule type" value="Genomic_DNA"/>
</dbReference>
<dbReference type="PIR" id="B69811">
    <property type="entry name" value="B69811"/>
</dbReference>
<dbReference type="RefSeq" id="NP_388645.1">
    <property type="nucleotide sequence ID" value="NC_000964.3"/>
</dbReference>
<dbReference type="RefSeq" id="WP_003243829.1">
    <property type="nucleotide sequence ID" value="NZ_OZ025638.1"/>
</dbReference>
<dbReference type="PDB" id="2FHM">
    <property type="method" value="NMR"/>
    <property type="chains" value="A=1-91"/>
</dbReference>
<dbReference type="PDB" id="2HLT">
    <property type="method" value="NMR"/>
    <property type="chains" value="A=1-91"/>
</dbReference>
<dbReference type="PDB" id="2HLU">
    <property type="method" value="NMR"/>
    <property type="chains" value="A=1-91"/>
</dbReference>
<dbReference type="PDB" id="3BR8">
    <property type="method" value="X-ray"/>
    <property type="resolution" value="1.33 A"/>
    <property type="chains" value="A=1-91"/>
</dbReference>
<dbReference type="PDBsum" id="2FHM"/>
<dbReference type="PDBsum" id="2HLT"/>
<dbReference type="PDBsum" id="2HLU"/>
<dbReference type="PDBsum" id="3BR8"/>
<dbReference type="BMRB" id="O35031"/>
<dbReference type="SMR" id="O35031"/>
<dbReference type="FunCoup" id="O35031">
    <property type="interactions" value="355"/>
</dbReference>
<dbReference type="STRING" id="224308.BSU07640"/>
<dbReference type="PaxDb" id="224308-BSU07640"/>
<dbReference type="EnsemblBacteria" id="CAB12593">
    <property type="protein sequence ID" value="CAB12593"/>
    <property type="gene ID" value="BSU_07640"/>
</dbReference>
<dbReference type="GeneID" id="939684"/>
<dbReference type="KEGG" id="bsu:BSU07640"/>
<dbReference type="PATRIC" id="fig|224308.179.peg.830"/>
<dbReference type="eggNOG" id="COG1254">
    <property type="taxonomic scope" value="Bacteria"/>
</dbReference>
<dbReference type="InParanoid" id="O35031"/>
<dbReference type="OrthoDB" id="9808093at2"/>
<dbReference type="PhylomeDB" id="O35031"/>
<dbReference type="BioCyc" id="BSUB:BSU07640-MONOMER"/>
<dbReference type="EvolutionaryTrace" id="O35031"/>
<dbReference type="Proteomes" id="UP000001570">
    <property type="component" value="Chromosome"/>
</dbReference>
<dbReference type="GO" id="GO:0003998">
    <property type="term" value="F:acylphosphatase activity"/>
    <property type="evidence" value="ECO:0000318"/>
    <property type="project" value="GO_Central"/>
</dbReference>
<dbReference type="Gene3D" id="3.30.70.100">
    <property type="match status" value="1"/>
</dbReference>
<dbReference type="InterPro" id="IPR020456">
    <property type="entry name" value="Acylphosphatase"/>
</dbReference>
<dbReference type="InterPro" id="IPR001792">
    <property type="entry name" value="Acylphosphatase-like_dom"/>
</dbReference>
<dbReference type="InterPro" id="IPR036046">
    <property type="entry name" value="Acylphosphatase-like_dom_sf"/>
</dbReference>
<dbReference type="InterPro" id="IPR017968">
    <property type="entry name" value="Acylphosphatase_CS"/>
</dbReference>
<dbReference type="NCBIfam" id="NF010995">
    <property type="entry name" value="PRK14420.1"/>
    <property type="match status" value="1"/>
</dbReference>
<dbReference type="PANTHER" id="PTHR47268">
    <property type="entry name" value="ACYLPHOSPHATASE"/>
    <property type="match status" value="1"/>
</dbReference>
<dbReference type="PANTHER" id="PTHR47268:SF4">
    <property type="entry name" value="ACYLPHOSPHATASE"/>
    <property type="match status" value="1"/>
</dbReference>
<dbReference type="Pfam" id="PF00708">
    <property type="entry name" value="Acylphosphatase"/>
    <property type="match status" value="1"/>
</dbReference>
<dbReference type="PRINTS" id="PR00112">
    <property type="entry name" value="ACYLPHPHTASE"/>
</dbReference>
<dbReference type="SUPFAM" id="SSF54975">
    <property type="entry name" value="Acylphosphatase/BLUF domain-like"/>
    <property type="match status" value="1"/>
</dbReference>
<dbReference type="PROSITE" id="PS00150">
    <property type="entry name" value="ACYLPHOSPHATASE_1"/>
    <property type="match status" value="1"/>
</dbReference>
<dbReference type="PROSITE" id="PS00151">
    <property type="entry name" value="ACYLPHOSPHATASE_2"/>
    <property type="match status" value="1"/>
</dbReference>
<dbReference type="PROSITE" id="PS51160">
    <property type="entry name" value="ACYLPHOSPHATASE_3"/>
    <property type="match status" value="1"/>
</dbReference>
<organism>
    <name type="scientific">Bacillus subtilis (strain 168)</name>
    <dbReference type="NCBI Taxonomy" id="224308"/>
    <lineage>
        <taxon>Bacteria</taxon>
        <taxon>Bacillati</taxon>
        <taxon>Bacillota</taxon>
        <taxon>Bacilli</taxon>
        <taxon>Bacillales</taxon>
        <taxon>Bacillaceae</taxon>
        <taxon>Bacillus</taxon>
    </lineage>
</organism>
<reference key="1">
    <citation type="journal article" date="1997" name="Gene">
        <title>Cloning and sequencing of a 35.7 kb in the 70 degree-73 degree region of the Bacillus subtilis genome reveal genes for a new two-component system, three spore germination proteins, an iron uptake system and a general stress response protein.</title>
        <authorList>
            <person name="Yamamoto H."/>
            <person name="Uchiyama S."/>
            <person name="Nugroho F.A."/>
            <person name="Sekiguchi J."/>
        </authorList>
    </citation>
    <scope>NUCLEOTIDE SEQUENCE [GENOMIC DNA]</scope>
    <source>
        <strain>168 / AC327</strain>
    </source>
</reference>
<reference key="2">
    <citation type="journal article" date="1997" name="Nature">
        <title>The complete genome sequence of the Gram-positive bacterium Bacillus subtilis.</title>
        <authorList>
            <person name="Kunst F."/>
            <person name="Ogasawara N."/>
            <person name="Moszer I."/>
            <person name="Albertini A.M."/>
            <person name="Alloni G."/>
            <person name="Azevedo V."/>
            <person name="Bertero M.G."/>
            <person name="Bessieres P."/>
            <person name="Bolotin A."/>
            <person name="Borchert S."/>
            <person name="Borriss R."/>
            <person name="Boursier L."/>
            <person name="Brans A."/>
            <person name="Braun M."/>
            <person name="Brignell S.C."/>
            <person name="Bron S."/>
            <person name="Brouillet S."/>
            <person name="Bruschi C.V."/>
            <person name="Caldwell B."/>
            <person name="Capuano V."/>
            <person name="Carter N.M."/>
            <person name="Choi S.-K."/>
            <person name="Codani J.-J."/>
            <person name="Connerton I.F."/>
            <person name="Cummings N.J."/>
            <person name="Daniel R.A."/>
            <person name="Denizot F."/>
            <person name="Devine K.M."/>
            <person name="Duesterhoeft A."/>
            <person name="Ehrlich S.D."/>
            <person name="Emmerson P.T."/>
            <person name="Entian K.-D."/>
            <person name="Errington J."/>
            <person name="Fabret C."/>
            <person name="Ferrari E."/>
            <person name="Foulger D."/>
            <person name="Fritz C."/>
            <person name="Fujita M."/>
            <person name="Fujita Y."/>
            <person name="Fuma S."/>
            <person name="Galizzi A."/>
            <person name="Galleron N."/>
            <person name="Ghim S.-Y."/>
            <person name="Glaser P."/>
            <person name="Goffeau A."/>
            <person name="Golightly E.J."/>
            <person name="Grandi G."/>
            <person name="Guiseppi G."/>
            <person name="Guy B.J."/>
            <person name="Haga K."/>
            <person name="Haiech J."/>
            <person name="Harwood C.R."/>
            <person name="Henaut A."/>
            <person name="Hilbert H."/>
            <person name="Holsappel S."/>
            <person name="Hosono S."/>
            <person name="Hullo M.-F."/>
            <person name="Itaya M."/>
            <person name="Jones L.-M."/>
            <person name="Joris B."/>
            <person name="Karamata D."/>
            <person name="Kasahara Y."/>
            <person name="Klaerr-Blanchard M."/>
            <person name="Klein C."/>
            <person name="Kobayashi Y."/>
            <person name="Koetter P."/>
            <person name="Koningstein G."/>
            <person name="Krogh S."/>
            <person name="Kumano M."/>
            <person name="Kurita K."/>
            <person name="Lapidus A."/>
            <person name="Lardinois S."/>
            <person name="Lauber J."/>
            <person name="Lazarevic V."/>
            <person name="Lee S.-M."/>
            <person name="Levine A."/>
            <person name="Liu H."/>
            <person name="Masuda S."/>
            <person name="Mauel C."/>
            <person name="Medigue C."/>
            <person name="Medina N."/>
            <person name="Mellado R.P."/>
            <person name="Mizuno M."/>
            <person name="Moestl D."/>
            <person name="Nakai S."/>
            <person name="Noback M."/>
            <person name="Noone D."/>
            <person name="O'Reilly M."/>
            <person name="Ogawa K."/>
            <person name="Ogiwara A."/>
            <person name="Oudega B."/>
            <person name="Park S.-H."/>
            <person name="Parro V."/>
            <person name="Pohl T.M."/>
            <person name="Portetelle D."/>
            <person name="Porwollik S."/>
            <person name="Prescott A.M."/>
            <person name="Presecan E."/>
            <person name="Pujic P."/>
            <person name="Purnelle B."/>
            <person name="Rapoport G."/>
            <person name="Rey M."/>
            <person name="Reynolds S."/>
            <person name="Rieger M."/>
            <person name="Rivolta C."/>
            <person name="Rocha E."/>
            <person name="Roche B."/>
            <person name="Rose M."/>
            <person name="Sadaie Y."/>
            <person name="Sato T."/>
            <person name="Scanlan E."/>
            <person name="Schleich S."/>
            <person name="Schroeter R."/>
            <person name="Scoffone F."/>
            <person name="Sekiguchi J."/>
            <person name="Sekowska A."/>
            <person name="Seror S.J."/>
            <person name="Serror P."/>
            <person name="Shin B.-S."/>
            <person name="Soldo B."/>
            <person name="Sorokin A."/>
            <person name="Tacconi E."/>
            <person name="Takagi T."/>
            <person name="Takahashi H."/>
            <person name="Takemaru K."/>
            <person name="Takeuchi M."/>
            <person name="Tamakoshi A."/>
            <person name="Tanaka T."/>
            <person name="Terpstra P."/>
            <person name="Tognoni A."/>
            <person name="Tosato V."/>
            <person name="Uchiyama S."/>
            <person name="Vandenbol M."/>
            <person name="Vannier F."/>
            <person name="Vassarotti A."/>
            <person name="Viari A."/>
            <person name="Wambutt R."/>
            <person name="Wedler E."/>
            <person name="Wedler H."/>
            <person name="Weitzenegger T."/>
            <person name="Winters P."/>
            <person name="Wipat A."/>
            <person name="Yamamoto H."/>
            <person name="Yamane K."/>
            <person name="Yasumoto K."/>
            <person name="Yata K."/>
            <person name="Yoshida K."/>
            <person name="Yoshikawa H.-F."/>
            <person name="Zumstein E."/>
            <person name="Yoshikawa H."/>
            <person name="Danchin A."/>
        </authorList>
    </citation>
    <scope>NUCLEOTIDE SEQUENCE [LARGE SCALE GENOMIC DNA]</scope>
    <source>
        <strain>168</strain>
    </source>
</reference>
<reference key="3">
    <citation type="journal article" date="2010" name="FEBS Lett.">
        <title>Solution structure and conformational heterogeneity of acylphosphatase from Bacillus subtilis.</title>
        <authorList>
            <person name="Hu J."/>
            <person name="Li D."/>
            <person name="Su X.D."/>
            <person name="Jin C."/>
            <person name="Xia B."/>
        </authorList>
    </citation>
    <scope>STRUCTURE BY NMR</scope>
    <scope>CATALYTIC ACTIVITY</scope>
    <scope>BIOPHYSICOCHEMICAL PROPERTIES</scope>
    <scope>ACTIVE SITE</scope>
</reference>
<comment type="catalytic activity">
    <reaction evidence="2">
        <text>an acyl phosphate + H2O = a carboxylate + phosphate + H(+)</text>
        <dbReference type="Rhea" id="RHEA:14965"/>
        <dbReference type="ChEBI" id="CHEBI:15377"/>
        <dbReference type="ChEBI" id="CHEBI:15378"/>
        <dbReference type="ChEBI" id="CHEBI:29067"/>
        <dbReference type="ChEBI" id="CHEBI:43474"/>
        <dbReference type="ChEBI" id="CHEBI:59918"/>
        <dbReference type="EC" id="3.6.1.7"/>
    </reaction>
</comment>
<comment type="biophysicochemical properties">
    <phDependence>
        <text evidence="2">Optimum pH is 5.3.</text>
    </phDependence>
</comment>
<comment type="similarity">
    <text evidence="3">Belongs to the acylphosphatase family.</text>
</comment>
<gene>
    <name type="primary">acyP</name>
    <name type="synonym">AcP</name>
    <name type="synonym">yflL</name>
    <name type="ordered locus">BSU07640</name>
</gene>
<feature type="chain" id="PRO_0000158552" description="Acylphosphatase">
    <location>
        <begin position="1"/>
        <end position="91"/>
    </location>
</feature>
<feature type="domain" description="Acylphosphatase-like" evidence="1">
    <location>
        <begin position="3"/>
        <end position="90"/>
    </location>
</feature>
<feature type="active site" evidence="1 2">
    <location>
        <position position="18"/>
    </location>
</feature>
<feature type="active site" evidence="1 2">
    <location>
        <position position="36"/>
    </location>
</feature>
<feature type="strand" evidence="4">
    <location>
        <begin position="2"/>
        <end position="11"/>
    </location>
</feature>
<feature type="strand" evidence="4">
    <location>
        <begin position="13"/>
        <end position="16"/>
    </location>
</feature>
<feature type="helix" evidence="4">
    <location>
        <begin position="17"/>
        <end position="27"/>
    </location>
</feature>
<feature type="strand" evidence="4">
    <location>
        <begin position="31"/>
        <end position="36"/>
    </location>
</feature>
<feature type="strand" evidence="4">
    <location>
        <begin position="42"/>
        <end position="48"/>
    </location>
</feature>
<feature type="helix" evidence="4">
    <location>
        <begin position="50"/>
        <end position="62"/>
    </location>
</feature>
<feature type="strand" evidence="4">
    <location>
        <begin position="68"/>
        <end position="78"/>
    </location>
</feature>
<feature type="strand" evidence="4">
    <location>
        <begin position="85"/>
        <end position="88"/>
    </location>
</feature>
<proteinExistence type="evidence at protein level"/>
<accession>O35031</accession>
<name>ACYP_BACSU</name>
<evidence type="ECO:0000255" key="1">
    <source>
        <dbReference type="PROSITE-ProRule" id="PRU00520"/>
    </source>
</evidence>
<evidence type="ECO:0000269" key="2">
    <source>
    </source>
</evidence>
<evidence type="ECO:0000305" key="3"/>
<evidence type="ECO:0007829" key="4">
    <source>
        <dbReference type="PDB" id="3BR8"/>
    </source>
</evidence>
<keyword id="KW-0002">3D-structure</keyword>
<keyword id="KW-0378">Hydrolase</keyword>
<keyword id="KW-1185">Reference proteome</keyword>
<sequence length="91" mass="10318">MLQYRIIVDGRVQGVGFRYFVQMEADKRKLAGWVKNRDDGRVEILAEGPENALQSFVEAVKNGSPFSKVTDISVTESRSLEGHHRFSIVYS</sequence>
<protein>
    <recommendedName>
        <fullName>Acylphosphatase</fullName>
        <ecNumber>3.6.1.7</ecNumber>
    </recommendedName>
    <alternativeName>
        <fullName>Acylphosphate phosphohydrolase</fullName>
    </alternativeName>
</protein>